<protein>
    <recommendedName>
        <fullName evidence="1">GMP reductase</fullName>
        <ecNumber evidence="1">1.7.1.7</ecNumber>
    </recommendedName>
    <alternativeName>
        <fullName evidence="1">Guanosine 5'-monophosphate oxidoreductase</fullName>
        <shortName evidence="1">Guanosine monophosphate reductase</shortName>
    </alternativeName>
</protein>
<name>GUAC_LATSS</name>
<sequence length="325" mass="36067">MDVFDYEDVQLIPNKCIVKSRSEIDTTVRFGSETFKIPVVPANMQTIIDEPLAIWLAENHYFYVMHRFQPEKRPAFIKMMHERNLFASISVGVKDDEFDFINQLAQDNLIPEYITIDIAHGHSQVVIDMIQHIKKVLPKSFVIAGNVGTPEAVRDLERAGADATKVGIGPGKVCITKIKTGFGTGGWQLGALRWCAKAATKPIIADGGIRTNGDIAKSIRFGANMVMIGSLFAGHTESPGELVEEDGQQFKEYFGSASEFQKGTHQNVEGKRILVPYKGSISDTLTEMRQDLQSSISYAGGKRLSALRKVDYVLVRHSIFNGDML</sequence>
<gene>
    <name evidence="1" type="primary">guaC</name>
    <name type="ordered locus">LCA_0476</name>
</gene>
<keyword id="KW-0521">NADP</keyword>
<keyword id="KW-0560">Oxidoreductase</keyword>
<keyword id="KW-1185">Reference proteome</keyword>
<accession>Q38YF0</accession>
<dbReference type="EC" id="1.7.1.7" evidence="1"/>
<dbReference type="EMBL" id="CR936503">
    <property type="protein sequence ID" value="CAI54777.1"/>
    <property type="molecule type" value="Genomic_DNA"/>
</dbReference>
<dbReference type="RefSeq" id="WP_011374185.1">
    <property type="nucleotide sequence ID" value="NC_007576.1"/>
</dbReference>
<dbReference type="SMR" id="Q38YF0"/>
<dbReference type="STRING" id="314315.LCA_0476"/>
<dbReference type="GeneID" id="57133340"/>
<dbReference type="KEGG" id="lsa:LCA_0476"/>
<dbReference type="eggNOG" id="COG0516">
    <property type="taxonomic scope" value="Bacteria"/>
</dbReference>
<dbReference type="HOGENOM" id="CLU_022552_5_0_9"/>
<dbReference type="OrthoDB" id="9805398at2"/>
<dbReference type="Proteomes" id="UP000002707">
    <property type="component" value="Chromosome"/>
</dbReference>
<dbReference type="GO" id="GO:0005829">
    <property type="term" value="C:cytosol"/>
    <property type="evidence" value="ECO:0007669"/>
    <property type="project" value="TreeGrafter"/>
</dbReference>
<dbReference type="GO" id="GO:1902560">
    <property type="term" value="C:GMP reductase complex"/>
    <property type="evidence" value="ECO:0007669"/>
    <property type="project" value="InterPro"/>
</dbReference>
<dbReference type="GO" id="GO:0003920">
    <property type="term" value="F:GMP reductase activity"/>
    <property type="evidence" value="ECO:0007669"/>
    <property type="project" value="UniProtKB-UniRule"/>
</dbReference>
<dbReference type="GO" id="GO:0006163">
    <property type="term" value="P:purine nucleotide metabolic process"/>
    <property type="evidence" value="ECO:0007669"/>
    <property type="project" value="UniProtKB-UniRule"/>
</dbReference>
<dbReference type="CDD" id="cd00381">
    <property type="entry name" value="IMPDH"/>
    <property type="match status" value="1"/>
</dbReference>
<dbReference type="FunFam" id="3.20.20.70:FF:000424">
    <property type="entry name" value="Inosine-5'-monophosphate dehydrogenase 2"/>
    <property type="match status" value="1"/>
</dbReference>
<dbReference type="Gene3D" id="3.20.20.70">
    <property type="entry name" value="Aldolase class I"/>
    <property type="match status" value="1"/>
</dbReference>
<dbReference type="HAMAP" id="MF_01511">
    <property type="entry name" value="GMP_reduct_type2"/>
    <property type="match status" value="1"/>
</dbReference>
<dbReference type="InterPro" id="IPR013785">
    <property type="entry name" value="Aldolase_TIM"/>
</dbReference>
<dbReference type="InterPro" id="IPR050139">
    <property type="entry name" value="GMP_reductase"/>
</dbReference>
<dbReference type="InterPro" id="IPR005994">
    <property type="entry name" value="GuaC_type_2"/>
</dbReference>
<dbReference type="InterPro" id="IPR015875">
    <property type="entry name" value="IMP_DH/GMP_Rdtase_CS"/>
</dbReference>
<dbReference type="InterPro" id="IPR001093">
    <property type="entry name" value="IMP_DH_GMPRt"/>
</dbReference>
<dbReference type="NCBIfam" id="TIGR01306">
    <property type="entry name" value="GMP_reduct_2"/>
    <property type="match status" value="1"/>
</dbReference>
<dbReference type="NCBIfam" id="NF003966">
    <property type="entry name" value="PRK05458.1"/>
    <property type="match status" value="1"/>
</dbReference>
<dbReference type="PANTHER" id="PTHR43170">
    <property type="entry name" value="GMP REDUCTASE"/>
    <property type="match status" value="1"/>
</dbReference>
<dbReference type="PANTHER" id="PTHR43170:SF5">
    <property type="entry name" value="GMP REDUCTASE"/>
    <property type="match status" value="1"/>
</dbReference>
<dbReference type="Pfam" id="PF00478">
    <property type="entry name" value="IMPDH"/>
    <property type="match status" value="1"/>
</dbReference>
<dbReference type="PIRSF" id="PIRSF036500">
    <property type="entry name" value="GMP_red_Firmic"/>
    <property type="match status" value="1"/>
</dbReference>
<dbReference type="SMART" id="SM01240">
    <property type="entry name" value="IMPDH"/>
    <property type="match status" value="1"/>
</dbReference>
<dbReference type="SUPFAM" id="SSF51412">
    <property type="entry name" value="Inosine monophosphate dehydrogenase (IMPDH)"/>
    <property type="match status" value="1"/>
</dbReference>
<dbReference type="PROSITE" id="PS00487">
    <property type="entry name" value="IMP_DH_GMP_RED"/>
    <property type="match status" value="1"/>
</dbReference>
<reference key="1">
    <citation type="journal article" date="2005" name="Nat. Biotechnol.">
        <title>The complete genome sequence of the meat-borne lactic acid bacterium Lactobacillus sakei 23K.</title>
        <authorList>
            <person name="Chaillou S."/>
            <person name="Champomier-Verges M.-C."/>
            <person name="Cornet M."/>
            <person name="Crutz-Le Coq A.-M."/>
            <person name="Dudez A.-M."/>
            <person name="Martin V."/>
            <person name="Beaufils S."/>
            <person name="Darbon-Rongere E."/>
            <person name="Bossy R."/>
            <person name="Loux V."/>
            <person name="Zagorec M."/>
        </authorList>
    </citation>
    <scope>NUCLEOTIDE SEQUENCE [LARGE SCALE GENOMIC DNA]</scope>
    <source>
        <strain>23K</strain>
    </source>
</reference>
<organism>
    <name type="scientific">Latilactobacillus sakei subsp. sakei (strain 23K)</name>
    <name type="common">Lactobacillus sakei subsp. sakei</name>
    <dbReference type="NCBI Taxonomy" id="314315"/>
    <lineage>
        <taxon>Bacteria</taxon>
        <taxon>Bacillati</taxon>
        <taxon>Bacillota</taxon>
        <taxon>Bacilli</taxon>
        <taxon>Lactobacillales</taxon>
        <taxon>Lactobacillaceae</taxon>
        <taxon>Latilactobacillus</taxon>
    </lineage>
</organism>
<proteinExistence type="inferred from homology"/>
<comment type="function">
    <text evidence="1">Catalyzes the irreversible NADPH-dependent deamination of GMP to IMP. It functions in the conversion of nucleobase, nucleoside and nucleotide derivatives of G to A nucleotides, and in maintaining the intracellular balance of A and G nucleotides.</text>
</comment>
<comment type="catalytic activity">
    <reaction evidence="1">
        <text>IMP + NH4(+) + NADP(+) = GMP + NADPH + 2 H(+)</text>
        <dbReference type="Rhea" id="RHEA:17185"/>
        <dbReference type="ChEBI" id="CHEBI:15378"/>
        <dbReference type="ChEBI" id="CHEBI:28938"/>
        <dbReference type="ChEBI" id="CHEBI:57783"/>
        <dbReference type="ChEBI" id="CHEBI:58053"/>
        <dbReference type="ChEBI" id="CHEBI:58115"/>
        <dbReference type="ChEBI" id="CHEBI:58349"/>
        <dbReference type="EC" id="1.7.1.7"/>
    </reaction>
</comment>
<comment type="similarity">
    <text evidence="1">Belongs to the IMPDH/GMPR family. GuaC type 2 subfamily.</text>
</comment>
<feature type="chain" id="PRO_0000292052" description="GMP reductase">
    <location>
        <begin position="1"/>
        <end position="325"/>
    </location>
</feature>
<feature type="active site" description="Thioimidate intermediate" evidence="1">
    <location>
        <position position="174"/>
    </location>
</feature>
<feature type="binding site" evidence="1">
    <location>
        <begin position="203"/>
        <end position="226"/>
    </location>
    <ligand>
        <name>NADP(+)</name>
        <dbReference type="ChEBI" id="CHEBI:58349"/>
    </ligand>
</feature>
<evidence type="ECO:0000255" key="1">
    <source>
        <dbReference type="HAMAP-Rule" id="MF_01511"/>
    </source>
</evidence>